<evidence type="ECO:0000250" key="1">
    <source>
        <dbReference type="UniProtKB" id="D9IA45"/>
    </source>
</evidence>
<evidence type="ECO:0000250" key="2">
    <source>
        <dbReference type="UniProtKB" id="Q3J015"/>
    </source>
</evidence>
<evidence type="ECO:0000250" key="3">
    <source>
        <dbReference type="UniProtKB" id="Q52689"/>
    </source>
</evidence>
<evidence type="ECO:0000250" key="4">
    <source>
        <dbReference type="UniProtKB" id="Q8KS19"/>
    </source>
</evidence>
<evidence type="ECO:0000255" key="5"/>
<evidence type="ECO:0000255" key="6">
    <source>
        <dbReference type="PROSITE-ProRule" id="PRU00433"/>
    </source>
</evidence>
<evidence type="ECO:0000269" key="7">
    <source>
    </source>
</evidence>
<evidence type="ECO:0000269" key="8">
    <source>
    </source>
</evidence>
<evidence type="ECO:0000269" key="9">
    <source>
    </source>
</evidence>
<evidence type="ECO:0000269" key="10">
    <source>
    </source>
</evidence>
<evidence type="ECO:0000269" key="11">
    <source>
    </source>
</evidence>
<evidence type="ECO:0000303" key="12">
    <source>
    </source>
</evidence>
<evidence type="ECO:0000303" key="13">
    <source>
    </source>
</evidence>
<evidence type="ECO:0000303" key="14">
    <source>
    </source>
</evidence>
<evidence type="ECO:0000305" key="15"/>
<evidence type="ECO:0000305" key="16">
    <source>
    </source>
</evidence>
<evidence type="ECO:0000305" key="17">
    <source>
    </source>
</evidence>
<evidence type="ECO:0000305" key="18">
    <source>
    </source>
</evidence>
<evidence type="ECO:0000305" key="19">
    <source>
    </source>
</evidence>
<evidence type="ECO:0000305" key="20">
    <source>
    </source>
</evidence>
<evidence type="ECO:0000312" key="21">
    <source>
        <dbReference type="EMBL" id="AAC46111.1"/>
    </source>
</evidence>
<evidence type="ECO:0000312" key="22">
    <source>
        <dbReference type="EMBL" id="ADE84918.1"/>
    </source>
</evidence>
<name>CCOP_RHOCB</name>
<accession>D5ARP7</accession>
<accession>O30730</accession>
<keyword id="KW-0002">3D-structure</keyword>
<keyword id="KW-0997">Cell inner membrane</keyword>
<keyword id="KW-1003">Cell membrane</keyword>
<keyword id="KW-0903">Direct protein sequencing</keyword>
<keyword id="KW-0249">Electron transport</keyword>
<keyword id="KW-0349">Heme</keyword>
<keyword id="KW-0375">Hydrogen ion transport</keyword>
<keyword id="KW-0406">Ion transport</keyword>
<keyword id="KW-0408">Iron</keyword>
<keyword id="KW-0472">Membrane</keyword>
<keyword id="KW-0479">Metal-binding</keyword>
<keyword id="KW-0560">Oxidoreductase</keyword>
<keyword id="KW-1185">Reference proteome</keyword>
<keyword id="KW-0677">Repeat</keyword>
<keyword id="KW-0679">Respiratory chain</keyword>
<keyword id="KW-0812">Transmembrane</keyword>
<keyword id="KW-1133">Transmembrane helix</keyword>
<keyword id="KW-0813">Transport</keyword>
<feature type="chain" id="PRO_0000412292" description="Cbb3-type cytochrome c oxidase subunit CcoP">
    <location>
        <begin position="1"/>
        <end position="297"/>
    </location>
</feature>
<feature type="topological domain" description="Cytoplasmic" evidence="2 5">
    <location>
        <begin position="1"/>
        <end position="35"/>
    </location>
</feature>
<feature type="transmembrane region" description="Helical" evidence="5">
    <location>
        <begin position="36"/>
        <end position="56"/>
    </location>
</feature>
<feature type="topological domain" description="Periplasmic" evidence="2 5">
    <location>
        <begin position="57"/>
        <end position="297"/>
    </location>
</feature>
<feature type="domain" description="Cytochrome c 1" evidence="6">
    <location>
        <begin position="108"/>
        <end position="199"/>
    </location>
</feature>
<feature type="domain" description="Cytochrome c 2" evidence="6">
    <location>
        <begin position="206"/>
        <end position="294"/>
    </location>
</feature>
<feature type="binding site" description="covalent" evidence="1">
    <location>
        <position position="121"/>
    </location>
    <ligand>
        <name>heme c</name>
        <dbReference type="ChEBI" id="CHEBI:61717"/>
        <label>1</label>
    </ligand>
</feature>
<feature type="binding site" description="covalent" evidence="1">
    <location>
        <position position="124"/>
    </location>
    <ligand>
        <name>heme c</name>
        <dbReference type="ChEBI" id="CHEBI:61717"/>
        <label>1</label>
    </ligand>
</feature>
<feature type="binding site" description="axial binding residue" evidence="1">
    <location>
        <position position="125"/>
    </location>
    <ligand>
        <name>heme c</name>
        <dbReference type="ChEBI" id="CHEBI:61717"/>
        <label>1</label>
    </ligand>
    <ligandPart>
        <name>Fe</name>
        <dbReference type="ChEBI" id="CHEBI:18248"/>
    </ligandPart>
</feature>
<feature type="binding site" description="axial binding residue" evidence="1">
    <location>
        <position position="174"/>
    </location>
    <ligand>
        <name>heme c</name>
        <dbReference type="ChEBI" id="CHEBI:61717"/>
        <label>2</label>
    </ligand>
    <ligandPart>
        <name>Fe</name>
        <dbReference type="ChEBI" id="CHEBI:18248"/>
    </ligandPart>
</feature>
<feature type="binding site" description="covalent" evidence="1">
    <location>
        <position position="219"/>
    </location>
    <ligand>
        <name>heme c</name>
        <dbReference type="ChEBI" id="CHEBI:61717"/>
        <label>2</label>
    </ligand>
</feature>
<feature type="binding site" description="covalent" evidence="1">
    <location>
        <position position="222"/>
    </location>
    <ligand>
        <name>heme c</name>
        <dbReference type="ChEBI" id="CHEBI:61717"/>
        <label>2</label>
    </ligand>
</feature>
<feature type="binding site" description="axial binding residue" evidence="1">
    <location>
        <position position="223"/>
    </location>
    <ligand>
        <name>heme c</name>
        <dbReference type="ChEBI" id="CHEBI:61717"/>
        <label>2</label>
    </ligand>
    <ligandPart>
        <name>Fe</name>
        <dbReference type="ChEBI" id="CHEBI:18248"/>
    </ligandPart>
</feature>
<feature type="binding site" description="axial binding residue" evidence="1">
    <location>
        <position position="264"/>
    </location>
    <ligand>
        <name>heme c</name>
        <dbReference type="ChEBI" id="CHEBI:61717"/>
        <label>1</label>
    </ligand>
    <ligandPart>
        <name>Fe</name>
        <dbReference type="ChEBI" id="CHEBI:18248"/>
    </ligandPart>
</feature>
<feature type="sequence variant" description="In strain: MT1131." evidence="11">
    <original>A</original>
    <variation>P</variation>
    <location>
        <position position="57"/>
    </location>
</feature>
<feature type="sequence variant" description="In strain: MT1131." evidence="11">
    <original>G</original>
    <variation>R</variation>
    <location>
        <position position="66"/>
    </location>
</feature>
<feature type="sequence variant" description="In strain: MT1131." evidence="11">
    <original>L</original>
    <variation>V</variation>
    <location>
        <position position="96"/>
    </location>
</feature>
<feature type="sequence variant" description="In strain: MT1131." evidence="11">
    <original>N</original>
    <variation>K</variation>
    <location>
        <position position="250"/>
    </location>
</feature>
<feature type="sequence conflict" description="In Ref. 3; AA sequence." evidence="15" ref="3">
    <original>GG</original>
    <variation>AT</variation>
    <location>
        <begin position="261"/>
        <end position="262"/>
    </location>
</feature>
<sequence>MSKKPTTKKEVQTTGHSWDGIEELNTPLPRWWLWTFYATIVWGVAYSIAMPAWPIFASGATPGILGSSTRADVEKDIAKFAEMNKAVEDKLVATDLTAIAADPELVTYTRNAGAAVFRTWCAQCHGAGAGGNTGFPSLLDGDWLHGGSIETIYTNIKHGIRDPLDPDTLPVANMPAHLTDELLEPAQIDDVVQYVLKISGQPADEARATAGQQVFADNCVSCHGEDAKGMVEMGAPNLTDGIWLYGGDANTITTTIQLGRGGVMPSWSWAADGAKPRLSEAQIRAVASYVHSLGGGQ</sequence>
<comment type="function">
    <text evidence="2 7 8 9 10 11 13">C-type cytochrome. Part of the cbb3-type cytochrome c oxidase complex. CcoP subunit is required for transferring electrons from donor cytochrome c via its heme groups to CcoO subunit. From there, electrons are shuttled to the catalytic binuclear center of CcoN subunit where oxygen reduction takes place. The complex also functions as a proton pump.</text>
</comment>
<comment type="cofactor">
    <cofactor evidence="1 10">
        <name>heme c</name>
        <dbReference type="ChEBI" id="CHEBI:61717"/>
    </cofactor>
    <text evidence="1 10">Binds 2 heme C groups per subunit.</text>
</comment>
<comment type="pathway">
    <text evidence="16 17 18 19 20">Energy metabolism; oxidative phosphorylation.</text>
</comment>
<comment type="subunit">
    <text evidence="7 9 10 11">Component of the cbb3-type cytochrome c oxidase at least composed of CcoN, CcoO, CcoQ and CcoP. Interacts with CcoH (via transmembrane domain).</text>
</comment>
<comment type="interaction">
    <interactant intactId="EBI-6440217">
        <id>D5ARP7</id>
    </interactant>
    <interactant intactId="EBI-6403447">
        <id>O30729</id>
        <label>ccoQ</label>
    </interactant>
    <organismsDiffer>true</organismsDiffer>
    <experiments>2</experiments>
</comment>
<comment type="subcellular location">
    <subcellularLocation>
        <location evidence="4 5">Cell inner membrane</location>
        <topology evidence="4 5">Single-pass membrane protein</topology>
    </subcellularLocation>
</comment>
<comment type="disruption phenotype">
    <text evidence="11">No oxygen uptake activity by the cbb3-type cytochrome c oxidase complex can be detected.</text>
</comment>
<comment type="similarity">
    <text evidence="15">Belongs to the CcoP / FixP family.</text>
</comment>
<proteinExistence type="evidence at protein level"/>
<organism>
    <name type="scientific">Rhodobacter capsulatus (strain ATCC BAA-309 / NBRC 16581 / SB1003)</name>
    <dbReference type="NCBI Taxonomy" id="272942"/>
    <lineage>
        <taxon>Bacteria</taxon>
        <taxon>Pseudomonadati</taxon>
        <taxon>Pseudomonadota</taxon>
        <taxon>Alphaproteobacteria</taxon>
        <taxon>Rhodobacterales</taxon>
        <taxon>Rhodobacter group</taxon>
        <taxon>Rhodobacter</taxon>
    </lineage>
</organism>
<reference evidence="15 21" key="1">
    <citation type="journal article" date="1998" name="J. Bacteriol.">
        <title>Isolation and characterization of Rhodobacter capsulatus mutants affected in cytochrome cbb3 oxidase activity.</title>
        <authorList>
            <person name="Koch H.G."/>
            <person name="Hwang O."/>
            <person name="Daldal F."/>
        </authorList>
    </citation>
    <scope>NUCLEOTIDE SEQUENCE [GENOMIC DNA]</scope>
    <scope>FUNCTION</scope>
    <scope>CATALYTIC ACTIVITY OF THE CYTOCHROME C OXIDASE COMPLEX</scope>
    <scope>SUBUNIT</scope>
    <scope>DISRUPTION PHENOTYPE</scope>
    <source>
        <strain evidence="21">MT1131</strain>
    </source>
</reference>
<reference evidence="22" key="2">
    <citation type="journal article" date="2010" name="J. Bacteriol.">
        <title>Complete genome sequence of the photosynthetic purple nonsulfur bacterium Rhodobacter capsulatus SB 1003.</title>
        <authorList>
            <person name="Strnad H."/>
            <person name="Lapidus A."/>
            <person name="Paces J."/>
            <person name="Ulbrich P."/>
            <person name="Vlcek C."/>
            <person name="Paces V."/>
            <person name="Haselkorn R."/>
        </authorList>
    </citation>
    <scope>NUCLEOTIDE SEQUENCE [LARGE SCALE GENOMIC DNA]</scope>
    <source>
        <strain evidence="22">ATCC BAA-309 / NBRC 16581 / SB1003</strain>
    </source>
</reference>
<reference evidence="15" key="3">
    <citation type="journal article" date="1994" name="Biochemistry">
        <title>Rhodobacter capsulatus contains a novel cb-type cytochrome c oxidase without a CuA center.</title>
        <authorList>
            <person name="Gray K.A."/>
            <person name="Grooms M."/>
            <person name="Myllykallio H."/>
            <person name="Moomaw C."/>
            <person name="Slaughter C."/>
            <person name="Daldal F."/>
        </authorList>
    </citation>
    <scope>PROTEIN SEQUENCE OF 86-107; 261-276 AND 285-297</scope>
    <scope>FUNCTION</scope>
    <scope>CATALYTIC ACTIVITY OF THE CYTOCHROME C OXIDASE COMPLEX</scope>
    <scope>COFACTOR</scope>
    <scope>SUBUNIT</scope>
    <scope>EPR SPECTROSCOPY OF THE CYTOCHROME C OXIDASE COMPLEX</scope>
    <scope>REDOX POTENTIOMETRY OF HEMES</scope>
    <source>
        <strain evidence="10">MT1131</strain>
    </source>
</reference>
<reference evidence="15" key="4">
    <citation type="journal article" date="2007" name="Mol. Biol. Rep.">
        <title>Two conserved non-canonical histidines are essential for activity of the cbb (3)-type oxidase in Rhodobacter capsulatus: non-canonical histidines are essential for cbb (3)-type oxidase activity in R. capsulatus.</title>
        <authorList>
            <person name="Ozturk M."/>
            <person name="Mandaci S."/>
        </authorList>
    </citation>
    <scope>FUNCTION</scope>
    <scope>CATALYTIC ACTIVITY OF THE CYTOCHROME C OXIDASE COMPLEX</scope>
    <scope>SUBUNIT</scope>
    <source>
        <strain evidence="7">MT1131</strain>
    </source>
</reference>
<reference evidence="15" key="5">
    <citation type="journal article" date="2008" name="J. Bacteriol.">
        <title>Stability of the cbb3-type cytochrome oxidase requires specific CcoQ-CcoP interactions.</title>
        <authorList>
            <person name="Peters A."/>
            <person name="Kulajta C."/>
            <person name="Pawlik G."/>
            <person name="Daldal F."/>
            <person name="Koch H.G."/>
        </authorList>
    </citation>
    <scope>FUNCTION</scope>
    <scope>CATALYTIC ACTIVITY OF THE CYTOCHROME C OXIDASE COMPLEX</scope>
    <source>
        <strain evidence="8">MT1131</strain>
    </source>
</reference>
<reference evidence="15" key="6">
    <citation type="journal article" date="2010" name="J. Bacteriol.">
        <title>The putative assembly factor CcoH is stably associated with the cbb3-type cytochrome oxidase.</title>
        <authorList>
            <person name="Pawlik G."/>
            <person name="Kulajta C."/>
            <person name="Sachelaru I."/>
            <person name="Schroder S."/>
            <person name="Waidner B."/>
            <person name="Hellwig P."/>
            <person name="Daldal F."/>
            <person name="Koch H.G."/>
        </authorList>
    </citation>
    <scope>FUNCTION</scope>
    <scope>CATALYTIC ACTIVITY OF THE CYTOCHROME C OXIDASE COMPLEX</scope>
    <scope>SUBUNIT</scope>
    <scope>INTERACTION WITH CCOH</scope>
    <source>
        <strain evidence="9">MT1131</strain>
    </source>
</reference>
<gene>
    <name evidence="22" type="primary">ccoP</name>
    <name type="ordered locus">RCAP_rcc01160</name>
</gene>
<protein>
    <recommendedName>
        <fullName evidence="14">Cbb3-type cytochrome c oxidase subunit CcoP</fullName>
        <shortName evidence="12">Cbb3-Cox subunit CcoP</shortName>
    </recommendedName>
    <alternativeName>
        <fullName evidence="3">C-type cytochrome CcoP</fullName>
        <shortName evidence="14">Cyt c(P)</shortName>
    </alternativeName>
    <alternativeName>
        <fullName evidence="14">Cytochrome c oxidase subunit III</fullName>
    </alternativeName>
</protein>
<dbReference type="EMBL" id="AF016223">
    <property type="protein sequence ID" value="AAC46111.1"/>
    <property type="molecule type" value="Genomic_DNA"/>
</dbReference>
<dbReference type="EMBL" id="CP001312">
    <property type="protein sequence ID" value="ADE84918.1"/>
    <property type="molecule type" value="Genomic_DNA"/>
</dbReference>
<dbReference type="RefSeq" id="WP_013066897.1">
    <property type="nucleotide sequence ID" value="NC_014034.1"/>
</dbReference>
<dbReference type="PDB" id="6XKW">
    <property type="method" value="EM"/>
    <property type="resolution" value="5.20 A"/>
    <property type="chains" value="p=1-297"/>
</dbReference>
<dbReference type="PDB" id="6XKX">
    <property type="method" value="EM"/>
    <property type="resolution" value="6.10 A"/>
    <property type="chains" value="p=1-297"/>
</dbReference>
<dbReference type="PDB" id="6XKZ">
    <property type="method" value="EM"/>
    <property type="resolution" value="7.20 A"/>
    <property type="chains" value="p=1-297"/>
</dbReference>
<dbReference type="PDBsum" id="6XKW"/>
<dbReference type="PDBsum" id="6XKX"/>
<dbReference type="PDBsum" id="6XKZ"/>
<dbReference type="EMDB" id="EMD-22227"/>
<dbReference type="SMR" id="D5ARP7"/>
<dbReference type="IntAct" id="D5ARP7">
    <property type="interactions" value="1"/>
</dbReference>
<dbReference type="STRING" id="272942.RCAP_rcc01160"/>
<dbReference type="GeneID" id="31490073"/>
<dbReference type="KEGG" id="rcp:RCAP_rcc01160"/>
<dbReference type="eggNOG" id="COG2010">
    <property type="taxonomic scope" value="Bacteria"/>
</dbReference>
<dbReference type="HOGENOM" id="CLU_047545_2_0_5"/>
<dbReference type="OrthoDB" id="9811281at2"/>
<dbReference type="BioCyc" id="MetaCyc:MONOMER-20999"/>
<dbReference type="UniPathway" id="UPA00705"/>
<dbReference type="Proteomes" id="UP000002361">
    <property type="component" value="Chromosome"/>
</dbReference>
<dbReference type="GO" id="GO:0005886">
    <property type="term" value="C:plasma membrane"/>
    <property type="evidence" value="ECO:0007669"/>
    <property type="project" value="UniProtKB-SubCell"/>
</dbReference>
<dbReference type="GO" id="GO:0009055">
    <property type="term" value="F:electron transfer activity"/>
    <property type="evidence" value="ECO:0007669"/>
    <property type="project" value="InterPro"/>
</dbReference>
<dbReference type="GO" id="GO:0020037">
    <property type="term" value="F:heme binding"/>
    <property type="evidence" value="ECO:0007669"/>
    <property type="project" value="InterPro"/>
</dbReference>
<dbReference type="GO" id="GO:0046872">
    <property type="term" value="F:metal ion binding"/>
    <property type="evidence" value="ECO:0007669"/>
    <property type="project" value="UniProtKB-KW"/>
</dbReference>
<dbReference type="GO" id="GO:0016491">
    <property type="term" value="F:oxidoreductase activity"/>
    <property type="evidence" value="ECO:0007669"/>
    <property type="project" value="UniProtKB-KW"/>
</dbReference>
<dbReference type="GO" id="GO:0006119">
    <property type="term" value="P:oxidative phosphorylation"/>
    <property type="evidence" value="ECO:0007669"/>
    <property type="project" value="UniProtKB-UniPathway"/>
</dbReference>
<dbReference type="GO" id="GO:1902600">
    <property type="term" value="P:proton transmembrane transport"/>
    <property type="evidence" value="ECO:0007669"/>
    <property type="project" value="UniProtKB-KW"/>
</dbReference>
<dbReference type="Gene3D" id="6.10.280.130">
    <property type="match status" value="1"/>
</dbReference>
<dbReference type="Gene3D" id="1.10.760.10">
    <property type="entry name" value="Cytochrome c-like domain"/>
    <property type="match status" value="2"/>
</dbReference>
<dbReference type="InterPro" id="IPR032858">
    <property type="entry name" value="CcoP_N"/>
</dbReference>
<dbReference type="InterPro" id="IPR038414">
    <property type="entry name" value="CcoP_N_sf"/>
</dbReference>
<dbReference type="InterPro" id="IPR009056">
    <property type="entry name" value="Cyt_c-like_dom"/>
</dbReference>
<dbReference type="InterPro" id="IPR036909">
    <property type="entry name" value="Cyt_c-like_dom_sf"/>
</dbReference>
<dbReference type="InterPro" id="IPR004678">
    <property type="entry name" value="Cyt_c_oxidase_cbb3_su3"/>
</dbReference>
<dbReference type="InterPro" id="IPR050597">
    <property type="entry name" value="Cytochrome_c_Oxidase_Subunit"/>
</dbReference>
<dbReference type="NCBIfam" id="TIGR00782">
    <property type="entry name" value="ccoP"/>
    <property type="match status" value="1"/>
</dbReference>
<dbReference type="PANTHER" id="PTHR33751">
    <property type="entry name" value="CBB3-TYPE CYTOCHROME C OXIDASE SUBUNIT FIXP"/>
    <property type="match status" value="1"/>
</dbReference>
<dbReference type="PANTHER" id="PTHR33751:SF1">
    <property type="entry name" value="CBB3-TYPE CYTOCHROME C OXIDASE SUBUNIT FIXP"/>
    <property type="match status" value="1"/>
</dbReference>
<dbReference type="Pfam" id="PF00034">
    <property type="entry name" value="Cytochrom_C"/>
    <property type="match status" value="1"/>
</dbReference>
<dbReference type="Pfam" id="PF13442">
    <property type="entry name" value="Cytochrome_CBB3"/>
    <property type="match status" value="1"/>
</dbReference>
<dbReference type="Pfam" id="PF14715">
    <property type="entry name" value="FixP_N"/>
    <property type="match status" value="1"/>
</dbReference>
<dbReference type="PIRSF" id="PIRSF000006">
    <property type="entry name" value="Cbb3-Cox_fixP"/>
    <property type="match status" value="1"/>
</dbReference>
<dbReference type="SUPFAM" id="SSF46626">
    <property type="entry name" value="Cytochrome c"/>
    <property type="match status" value="2"/>
</dbReference>
<dbReference type="PROSITE" id="PS51007">
    <property type="entry name" value="CYTC"/>
    <property type="match status" value="2"/>
</dbReference>